<reference key="1">
    <citation type="journal article" date="2001" name="Lancet">
        <title>Whole genome sequencing of meticillin-resistant Staphylococcus aureus.</title>
        <authorList>
            <person name="Kuroda M."/>
            <person name="Ohta T."/>
            <person name="Uchiyama I."/>
            <person name="Baba T."/>
            <person name="Yuzawa H."/>
            <person name="Kobayashi I."/>
            <person name="Cui L."/>
            <person name="Oguchi A."/>
            <person name="Aoki K."/>
            <person name="Nagai Y."/>
            <person name="Lian J.-Q."/>
            <person name="Ito T."/>
            <person name="Kanamori M."/>
            <person name="Matsumaru H."/>
            <person name="Maruyama A."/>
            <person name="Murakami H."/>
            <person name="Hosoyama A."/>
            <person name="Mizutani-Ui Y."/>
            <person name="Takahashi N.K."/>
            <person name="Sawano T."/>
            <person name="Inoue R."/>
            <person name="Kaito C."/>
            <person name="Sekimizu K."/>
            <person name="Hirakawa H."/>
            <person name="Kuhara S."/>
            <person name="Goto S."/>
            <person name="Yabuzaki J."/>
            <person name="Kanehisa M."/>
            <person name="Yamashita A."/>
            <person name="Oshima K."/>
            <person name="Furuya K."/>
            <person name="Yoshino C."/>
            <person name="Shiba T."/>
            <person name="Hattori M."/>
            <person name="Ogasawara N."/>
            <person name="Hayashi H."/>
            <person name="Hiramatsu K."/>
        </authorList>
    </citation>
    <scope>NUCLEOTIDE SEQUENCE [LARGE SCALE GENOMIC DNA]</scope>
    <source>
        <strain>Mu50 / ATCC 700699</strain>
    </source>
</reference>
<dbReference type="EMBL" id="BA000017">
    <property type="protein sequence ID" value="BAB56831.1"/>
    <property type="status" value="ALT_INIT"/>
    <property type="molecule type" value="Genomic_DNA"/>
</dbReference>
<dbReference type="RefSeq" id="WP_000532966.1">
    <property type="nucleotide sequence ID" value="NC_002758.2"/>
</dbReference>
<dbReference type="SMR" id="P67181"/>
<dbReference type="KEGG" id="sav:SAV0669"/>
<dbReference type="HOGENOM" id="CLU_062974_4_0_9"/>
<dbReference type="PhylomeDB" id="P67181"/>
<dbReference type="Proteomes" id="UP000002481">
    <property type="component" value="Chromosome"/>
</dbReference>
<dbReference type="GO" id="GO:0005829">
    <property type="term" value="C:cytosol"/>
    <property type="evidence" value="ECO:0007669"/>
    <property type="project" value="TreeGrafter"/>
</dbReference>
<dbReference type="GO" id="GO:0003677">
    <property type="term" value="F:DNA binding"/>
    <property type="evidence" value="ECO:0007669"/>
    <property type="project" value="UniProtKB-UniRule"/>
</dbReference>
<dbReference type="GO" id="GO:0006355">
    <property type="term" value="P:regulation of DNA-templated transcription"/>
    <property type="evidence" value="ECO:0007669"/>
    <property type="project" value="UniProtKB-UniRule"/>
</dbReference>
<dbReference type="FunFam" id="1.10.10.200:FF:000003">
    <property type="entry name" value="Probable transcriptional regulatory protein YeeN"/>
    <property type="match status" value="1"/>
</dbReference>
<dbReference type="Gene3D" id="1.10.10.200">
    <property type="match status" value="1"/>
</dbReference>
<dbReference type="Gene3D" id="3.30.70.980">
    <property type="match status" value="2"/>
</dbReference>
<dbReference type="HAMAP" id="MF_00693">
    <property type="entry name" value="Transcrip_reg_TACO1"/>
    <property type="match status" value="1"/>
</dbReference>
<dbReference type="HAMAP" id="MF_00918">
    <property type="entry name" value="Transcrip_reg_TACO1_YeeN"/>
    <property type="match status" value="1"/>
</dbReference>
<dbReference type="InterPro" id="IPR017856">
    <property type="entry name" value="Integrase-like_N"/>
</dbReference>
<dbReference type="InterPro" id="IPR048300">
    <property type="entry name" value="TACO1_YebC-like_2nd/3rd_dom"/>
</dbReference>
<dbReference type="InterPro" id="IPR049083">
    <property type="entry name" value="TACO1_YebC_N"/>
</dbReference>
<dbReference type="InterPro" id="IPR002876">
    <property type="entry name" value="Transcrip_reg_TACO1-like"/>
</dbReference>
<dbReference type="InterPro" id="IPR026564">
    <property type="entry name" value="Transcrip_reg_TACO1-like_dom3"/>
</dbReference>
<dbReference type="InterPro" id="IPR026562">
    <property type="entry name" value="Transcrip_reg_TACO1_YeeN"/>
</dbReference>
<dbReference type="InterPro" id="IPR029072">
    <property type="entry name" value="YebC-like"/>
</dbReference>
<dbReference type="NCBIfam" id="NF001030">
    <property type="entry name" value="PRK00110.1"/>
    <property type="match status" value="1"/>
</dbReference>
<dbReference type="NCBIfam" id="NF009044">
    <property type="entry name" value="PRK12378.1"/>
    <property type="match status" value="1"/>
</dbReference>
<dbReference type="NCBIfam" id="TIGR01033">
    <property type="entry name" value="YebC/PmpR family DNA-binding transcriptional regulator"/>
    <property type="match status" value="1"/>
</dbReference>
<dbReference type="PANTHER" id="PTHR12532">
    <property type="entry name" value="TRANSLATIONAL ACTIVATOR OF CYTOCHROME C OXIDASE 1"/>
    <property type="match status" value="1"/>
</dbReference>
<dbReference type="PANTHER" id="PTHR12532:SF0">
    <property type="entry name" value="TRANSLATIONAL ACTIVATOR OF CYTOCHROME C OXIDASE 1"/>
    <property type="match status" value="1"/>
</dbReference>
<dbReference type="Pfam" id="PF20772">
    <property type="entry name" value="TACO1_YebC_N"/>
    <property type="match status" value="1"/>
</dbReference>
<dbReference type="Pfam" id="PF01709">
    <property type="entry name" value="Transcrip_reg"/>
    <property type="match status" value="1"/>
</dbReference>
<dbReference type="SUPFAM" id="SSF75625">
    <property type="entry name" value="YebC-like"/>
    <property type="match status" value="1"/>
</dbReference>
<feature type="chain" id="PRO_0000175892" description="Probable transcriptional regulatory protein SAV0669">
    <location>
        <begin position="1"/>
        <end position="238"/>
    </location>
</feature>
<proteinExistence type="inferred from homology"/>
<sequence>MGRKWNNIKEKKAQKDKNTSRIYAKFGKEIYVAAKSGEPNPESNQALRLVLERAKTYSVPNHIIEKAIDKAKGAGDENFDHLRYEGFGPSGSMLIVDALTNNVNRTASDVRAAFGKNGGNMGVSGSVAYMFDHVATFGIEGKSVDEILETLMEQDVDVNDVIDDNGLTIVYAEPDQFAVVQDALRAAGVEEFKVAEFEMLPQTDIELSEADQVTFEKLIDALEDLEDVQNVFHNVDLK</sequence>
<organism>
    <name type="scientific">Staphylococcus aureus (strain Mu50 / ATCC 700699)</name>
    <dbReference type="NCBI Taxonomy" id="158878"/>
    <lineage>
        <taxon>Bacteria</taxon>
        <taxon>Bacillati</taxon>
        <taxon>Bacillota</taxon>
        <taxon>Bacilli</taxon>
        <taxon>Bacillales</taxon>
        <taxon>Staphylococcaceae</taxon>
        <taxon>Staphylococcus</taxon>
    </lineage>
</organism>
<name>Y669_STAAM</name>
<gene>
    <name type="ordered locus">SAV0669</name>
</gene>
<comment type="subcellular location">
    <subcellularLocation>
        <location evidence="1">Cytoplasm</location>
    </subcellularLocation>
</comment>
<comment type="similarity">
    <text evidence="1">Belongs to the TACO1 family. YeeN subfamily.</text>
</comment>
<comment type="sequence caution" evidence="2">
    <conflict type="erroneous initiation">
        <sequence resource="EMBL-CDS" id="BAB56831"/>
    </conflict>
</comment>
<keyword id="KW-0963">Cytoplasm</keyword>
<keyword id="KW-0238">DNA-binding</keyword>
<keyword id="KW-0804">Transcription</keyword>
<keyword id="KW-0805">Transcription regulation</keyword>
<evidence type="ECO:0000255" key="1">
    <source>
        <dbReference type="HAMAP-Rule" id="MF_00918"/>
    </source>
</evidence>
<evidence type="ECO:0000305" key="2"/>
<protein>
    <recommendedName>
        <fullName evidence="1">Probable transcriptional regulatory protein SAV0669</fullName>
    </recommendedName>
</protein>
<accession>P67181</accession>
<accession>Q8NXR2</accession>
<accession>Q99VV2</accession>